<reference key="1">
    <citation type="journal article" date="2004" name="Proc. Natl. Acad. Sci. U.S.A.">
        <title>Comparison of the genome of the oral pathogen Treponema denticola with other spirochete genomes.</title>
        <authorList>
            <person name="Seshadri R."/>
            <person name="Myers G.S.A."/>
            <person name="Tettelin H."/>
            <person name="Eisen J.A."/>
            <person name="Heidelberg J.F."/>
            <person name="Dodson R.J."/>
            <person name="Davidsen T.M."/>
            <person name="DeBoy R.T."/>
            <person name="Fouts D.E."/>
            <person name="Haft D.H."/>
            <person name="Selengut J."/>
            <person name="Ren Q."/>
            <person name="Brinkac L.M."/>
            <person name="Madupu R."/>
            <person name="Kolonay J.F."/>
            <person name="Durkin S.A."/>
            <person name="Daugherty S.C."/>
            <person name="Shetty J."/>
            <person name="Shvartsbeyn A."/>
            <person name="Gebregeorgis E."/>
            <person name="Geer K."/>
            <person name="Tsegaye G."/>
            <person name="Malek J.A."/>
            <person name="Ayodeji B."/>
            <person name="Shatsman S."/>
            <person name="McLeod M.P."/>
            <person name="Smajs D."/>
            <person name="Howell J.K."/>
            <person name="Pal S."/>
            <person name="Amin A."/>
            <person name="Vashisth P."/>
            <person name="McNeill T.Z."/>
            <person name="Xiang Q."/>
            <person name="Sodergren E."/>
            <person name="Baca E."/>
            <person name="Weinstock G.M."/>
            <person name="Norris S.J."/>
            <person name="Fraser C.M."/>
            <person name="Paulsen I.T."/>
        </authorList>
    </citation>
    <scope>NUCLEOTIDE SEQUENCE [LARGE SCALE GENOMIC DNA]</scope>
    <source>
        <strain>ATCC 35405 / DSM 14222 / CIP 103919 / JCM 8153 / KCTC 15104</strain>
    </source>
</reference>
<sequence length="509" mass="58024">MNWILYVILPAVCIILGWTIRWLYARFQLSASEQRAERILQEAIKDAEAQKKEFLLEAKEQLIREQKQQERENRERRSDLQRFERRLAQKEEVLDKRVETVEKQEKELIKREAALDERTEILSGEEERYREELERISGLTQQQAKDLIIRDLEAEAKHDAVTIINKIEQEAQLTAEKKAQDILITTIQRLATETASDITVSTVSLPSDEMKGRIIGREGRNIRALETLTGVDIIIDDTPEAVVVSCFDPVRKEIARVALERLILDGRIHPARIEEIVQKVTREISQKVYEEGEKVLFDLGIHNMNQEGVRALGRLYFRTSYGQNVLQHSKEVAIIAGMIASEIGANVEIAKRGALLHDIGKGAETDSDKNHAEIGMELAKRINEDPRVVNAVGAHHNDIEPTCIESVIVQIADAISAARPGARRETMDNYVKRLENLEQLAEGFNGVEKAYAIQAGRELRVVINNEKISDADTKILARDIAKKIENDLQYPGRIRVTLIRETRIVEYAR</sequence>
<comment type="function">
    <text evidence="1">Endoribonuclease that initiates mRNA decay.</text>
</comment>
<comment type="subcellular location">
    <subcellularLocation>
        <location evidence="1">Cell membrane</location>
        <topology evidence="1">Single-pass membrane protein</topology>
    </subcellularLocation>
</comment>
<comment type="similarity">
    <text evidence="1">Belongs to the RNase Y family.</text>
</comment>
<feature type="chain" id="PRO_0000344970" description="Ribonuclease Y">
    <location>
        <begin position="1"/>
        <end position="509"/>
    </location>
</feature>
<feature type="transmembrane region" description="Helical" evidence="1">
    <location>
        <begin position="3"/>
        <end position="23"/>
    </location>
</feature>
<feature type="domain" description="KH" evidence="1">
    <location>
        <begin position="199"/>
        <end position="284"/>
    </location>
</feature>
<feature type="domain" description="HD" evidence="2">
    <location>
        <begin position="325"/>
        <end position="418"/>
    </location>
</feature>
<protein>
    <recommendedName>
        <fullName evidence="1">Ribonuclease Y</fullName>
        <shortName evidence="1">RNase Y</shortName>
        <ecNumber evidence="1">3.1.-.-</ecNumber>
    </recommendedName>
</protein>
<organism>
    <name type="scientific">Treponema denticola (strain ATCC 35405 / DSM 14222 / CIP 103919 / JCM 8153 / KCTC 15104)</name>
    <dbReference type="NCBI Taxonomy" id="243275"/>
    <lineage>
        <taxon>Bacteria</taxon>
        <taxon>Pseudomonadati</taxon>
        <taxon>Spirochaetota</taxon>
        <taxon>Spirochaetia</taxon>
        <taxon>Spirochaetales</taxon>
        <taxon>Treponemataceae</taxon>
        <taxon>Treponema</taxon>
    </lineage>
</organism>
<accession>Q73R54</accession>
<gene>
    <name evidence="1" type="primary">rny</name>
    <name type="ordered locus">TDE_0237</name>
</gene>
<keyword id="KW-1003">Cell membrane</keyword>
<keyword id="KW-0255">Endonuclease</keyword>
<keyword id="KW-0378">Hydrolase</keyword>
<keyword id="KW-0472">Membrane</keyword>
<keyword id="KW-0540">Nuclease</keyword>
<keyword id="KW-1185">Reference proteome</keyword>
<keyword id="KW-0694">RNA-binding</keyword>
<keyword id="KW-0812">Transmembrane</keyword>
<keyword id="KW-1133">Transmembrane helix</keyword>
<evidence type="ECO:0000255" key="1">
    <source>
        <dbReference type="HAMAP-Rule" id="MF_00335"/>
    </source>
</evidence>
<evidence type="ECO:0000255" key="2">
    <source>
        <dbReference type="PROSITE-ProRule" id="PRU01175"/>
    </source>
</evidence>
<dbReference type="EC" id="3.1.-.-" evidence="1"/>
<dbReference type="EMBL" id="AE017226">
    <property type="protein sequence ID" value="AAS10734.1"/>
    <property type="molecule type" value="Genomic_DNA"/>
</dbReference>
<dbReference type="RefSeq" id="NP_970853.1">
    <property type="nucleotide sequence ID" value="NC_002967.9"/>
</dbReference>
<dbReference type="RefSeq" id="WP_002681149.1">
    <property type="nucleotide sequence ID" value="NC_002967.9"/>
</dbReference>
<dbReference type="SMR" id="Q73R54"/>
<dbReference type="STRING" id="243275.TDE_0237"/>
<dbReference type="PaxDb" id="243275-TDE_0237"/>
<dbReference type="GeneID" id="2739832"/>
<dbReference type="KEGG" id="tde:TDE_0237"/>
<dbReference type="PATRIC" id="fig|243275.7.peg.230"/>
<dbReference type="eggNOG" id="COG1418">
    <property type="taxonomic scope" value="Bacteria"/>
</dbReference>
<dbReference type="HOGENOM" id="CLU_028328_1_0_12"/>
<dbReference type="OrthoDB" id="9803205at2"/>
<dbReference type="Proteomes" id="UP000008212">
    <property type="component" value="Chromosome"/>
</dbReference>
<dbReference type="GO" id="GO:0005886">
    <property type="term" value="C:plasma membrane"/>
    <property type="evidence" value="ECO:0007669"/>
    <property type="project" value="UniProtKB-SubCell"/>
</dbReference>
<dbReference type="GO" id="GO:0003723">
    <property type="term" value="F:RNA binding"/>
    <property type="evidence" value="ECO:0007669"/>
    <property type="project" value="UniProtKB-UniRule"/>
</dbReference>
<dbReference type="GO" id="GO:0004521">
    <property type="term" value="F:RNA endonuclease activity"/>
    <property type="evidence" value="ECO:0007669"/>
    <property type="project" value="UniProtKB-UniRule"/>
</dbReference>
<dbReference type="GO" id="GO:0006402">
    <property type="term" value="P:mRNA catabolic process"/>
    <property type="evidence" value="ECO:0007669"/>
    <property type="project" value="UniProtKB-UniRule"/>
</dbReference>
<dbReference type="CDD" id="cd00077">
    <property type="entry name" value="HDc"/>
    <property type="match status" value="1"/>
</dbReference>
<dbReference type="CDD" id="cd22431">
    <property type="entry name" value="KH-I_RNaseY"/>
    <property type="match status" value="1"/>
</dbReference>
<dbReference type="FunFam" id="1.10.3210.10:FF:000013">
    <property type="entry name" value="Ribonuclease Y"/>
    <property type="match status" value="1"/>
</dbReference>
<dbReference type="Gene3D" id="1.10.3210.10">
    <property type="entry name" value="Hypothetical protein af1432"/>
    <property type="match status" value="1"/>
</dbReference>
<dbReference type="Gene3D" id="3.30.1370.10">
    <property type="entry name" value="K Homology domain, type 1"/>
    <property type="match status" value="1"/>
</dbReference>
<dbReference type="HAMAP" id="MF_00335">
    <property type="entry name" value="RNase_Y"/>
    <property type="match status" value="1"/>
</dbReference>
<dbReference type="InterPro" id="IPR003607">
    <property type="entry name" value="HD/PDEase_dom"/>
</dbReference>
<dbReference type="InterPro" id="IPR006674">
    <property type="entry name" value="HD_domain"/>
</dbReference>
<dbReference type="InterPro" id="IPR006675">
    <property type="entry name" value="HDIG_dom"/>
</dbReference>
<dbReference type="InterPro" id="IPR004087">
    <property type="entry name" value="KH_dom"/>
</dbReference>
<dbReference type="InterPro" id="IPR004088">
    <property type="entry name" value="KH_dom_type_1"/>
</dbReference>
<dbReference type="InterPro" id="IPR036612">
    <property type="entry name" value="KH_dom_type_1_sf"/>
</dbReference>
<dbReference type="InterPro" id="IPR017705">
    <property type="entry name" value="Ribonuclease_Y"/>
</dbReference>
<dbReference type="InterPro" id="IPR022711">
    <property type="entry name" value="RNase_Y_N"/>
</dbReference>
<dbReference type="NCBIfam" id="TIGR00277">
    <property type="entry name" value="HDIG"/>
    <property type="match status" value="1"/>
</dbReference>
<dbReference type="NCBIfam" id="NF009345">
    <property type="entry name" value="PRK12705.1-2"/>
    <property type="match status" value="1"/>
</dbReference>
<dbReference type="NCBIfam" id="TIGR03319">
    <property type="entry name" value="RNase_Y"/>
    <property type="match status" value="1"/>
</dbReference>
<dbReference type="PANTHER" id="PTHR12826">
    <property type="entry name" value="RIBONUCLEASE Y"/>
    <property type="match status" value="1"/>
</dbReference>
<dbReference type="PANTHER" id="PTHR12826:SF15">
    <property type="entry name" value="RIBONUCLEASE Y"/>
    <property type="match status" value="1"/>
</dbReference>
<dbReference type="Pfam" id="PF01966">
    <property type="entry name" value="HD"/>
    <property type="match status" value="1"/>
</dbReference>
<dbReference type="Pfam" id="PF00013">
    <property type="entry name" value="KH_1"/>
    <property type="match status" value="1"/>
</dbReference>
<dbReference type="Pfam" id="PF12072">
    <property type="entry name" value="RNase_Y_N"/>
    <property type="match status" value="1"/>
</dbReference>
<dbReference type="SMART" id="SM00471">
    <property type="entry name" value="HDc"/>
    <property type="match status" value="1"/>
</dbReference>
<dbReference type="SMART" id="SM00322">
    <property type="entry name" value="KH"/>
    <property type="match status" value="1"/>
</dbReference>
<dbReference type="SUPFAM" id="SSF54791">
    <property type="entry name" value="Eukaryotic type KH-domain (KH-domain type I)"/>
    <property type="match status" value="1"/>
</dbReference>
<dbReference type="SUPFAM" id="SSF109604">
    <property type="entry name" value="HD-domain/PDEase-like"/>
    <property type="match status" value="1"/>
</dbReference>
<dbReference type="PROSITE" id="PS51831">
    <property type="entry name" value="HD"/>
    <property type="match status" value="1"/>
</dbReference>
<dbReference type="PROSITE" id="PS50084">
    <property type="entry name" value="KH_TYPE_1"/>
    <property type="match status" value="1"/>
</dbReference>
<name>RNY_TREDE</name>
<proteinExistence type="inferred from homology"/>